<reference key="1">
    <citation type="journal article" date="2007" name="PLoS Genet.">
        <title>The complete genome sequence of Yersinia pseudotuberculosis IP31758, the causative agent of Far East scarlet-like fever.</title>
        <authorList>
            <person name="Eppinger M."/>
            <person name="Rosovitz M.J."/>
            <person name="Fricke W.F."/>
            <person name="Rasko D.A."/>
            <person name="Kokorina G."/>
            <person name="Fayolle C."/>
            <person name="Lindler L.E."/>
            <person name="Carniel E."/>
            <person name="Ravel J."/>
        </authorList>
    </citation>
    <scope>NUCLEOTIDE SEQUENCE [LARGE SCALE GENOMIC DNA]</scope>
    <source>
        <strain>IP 31758</strain>
    </source>
</reference>
<keyword id="KW-0010">Activator</keyword>
<keyword id="KW-0963">Cytoplasm</keyword>
<keyword id="KW-0804">Transcription</keyword>
<keyword id="KW-0805">Transcription regulation</keyword>
<feature type="chain" id="PRO_1000065791" description="Sigma factor-binding protein Crl">
    <location>
        <begin position="1"/>
        <end position="133"/>
    </location>
</feature>
<feature type="region of interest" description="Essential for activity" evidence="1">
    <location>
        <begin position="99"/>
        <end position="122"/>
    </location>
</feature>
<gene>
    <name evidence="1" type="primary">crl</name>
    <name type="ordered locus">YpsIP31758_3151</name>
</gene>
<proteinExistence type="inferred from homology"/>
<name>CRL_YERP3</name>
<dbReference type="EMBL" id="CP000720">
    <property type="protein sequence ID" value="ABS48182.1"/>
    <property type="molecule type" value="Genomic_DNA"/>
</dbReference>
<dbReference type="RefSeq" id="WP_012105593.1">
    <property type="nucleotide sequence ID" value="NC_009708.1"/>
</dbReference>
<dbReference type="SMR" id="A7FLI3"/>
<dbReference type="KEGG" id="ypi:YpsIP31758_3151"/>
<dbReference type="HOGENOM" id="CLU_136773_0_0_6"/>
<dbReference type="Proteomes" id="UP000002412">
    <property type="component" value="Chromosome"/>
</dbReference>
<dbReference type="GO" id="GO:0005737">
    <property type="term" value="C:cytoplasm"/>
    <property type="evidence" value="ECO:0007669"/>
    <property type="project" value="UniProtKB-SubCell"/>
</dbReference>
<dbReference type="GO" id="GO:0045893">
    <property type="term" value="P:positive regulation of DNA-templated transcription"/>
    <property type="evidence" value="ECO:0007669"/>
    <property type="project" value="UniProtKB-UniRule"/>
</dbReference>
<dbReference type="Gene3D" id="3.30.310.230">
    <property type="entry name" value="Sigma factor-binding protein Crl monomer"/>
    <property type="match status" value="1"/>
</dbReference>
<dbReference type="HAMAP" id="MF_01178">
    <property type="entry name" value="Crl"/>
    <property type="match status" value="1"/>
</dbReference>
<dbReference type="InterPro" id="IPR009986">
    <property type="entry name" value="Tscrpt_reg_Crl"/>
</dbReference>
<dbReference type="InterPro" id="IPR038208">
    <property type="entry name" value="Tscrpt_reg_Crl_sf"/>
</dbReference>
<dbReference type="NCBIfam" id="NF008217">
    <property type="entry name" value="PRK10984.1"/>
    <property type="match status" value="1"/>
</dbReference>
<dbReference type="Pfam" id="PF07417">
    <property type="entry name" value="Crl"/>
    <property type="match status" value="1"/>
</dbReference>
<sequence length="133" mass="15401">MTLTSAHPKSKLMKRFAALGPYLREGQCQNDHFFFDCLAVCINVKLAPEKREFWGWWIEQEPSAGRFTYVYQLGLFNKEGNWNAEKISDPEVQDKLESTLRSFHLRLEEMLASIDMKLEPAADFNDQPVKLSA</sequence>
<accession>A7FLI3</accession>
<organism>
    <name type="scientific">Yersinia pseudotuberculosis serotype O:1b (strain IP 31758)</name>
    <dbReference type="NCBI Taxonomy" id="349747"/>
    <lineage>
        <taxon>Bacteria</taxon>
        <taxon>Pseudomonadati</taxon>
        <taxon>Pseudomonadota</taxon>
        <taxon>Gammaproteobacteria</taxon>
        <taxon>Enterobacterales</taxon>
        <taxon>Yersiniaceae</taxon>
        <taxon>Yersinia</taxon>
    </lineage>
</organism>
<protein>
    <recommendedName>
        <fullName evidence="1">Sigma factor-binding protein Crl</fullName>
    </recommendedName>
</protein>
<comment type="function">
    <text evidence="1">Binds to the sigma-S subunit of RNA polymerase, activating expression of sigma-S-regulated genes. Stimulates RNA polymerase holoenzyme formation and may bind to several other sigma factors, such as sigma-70 and sigma-32.</text>
</comment>
<comment type="subcellular location">
    <subcellularLocation>
        <location evidence="1">Cytoplasm</location>
    </subcellularLocation>
</comment>
<comment type="similarity">
    <text evidence="1">Belongs to the Crl family.</text>
</comment>
<evidence type="ECO:0000255" key="1">
    <source>
        <dbReference type="HAMAP-Rule" id="MF_01178"/>
    </source>
</evidence>